<name>NUOCD_ACIBS</name>
<organism>
    <name type="scientific">Acinetobacter baumannii (strain SDF)</name>
    <dbReference type="NCBI Taxonomy" id="509170"/>
    <lineage>
        <taxon>Bacteria</taxon>
        <taxon>Pseudomonadati</taxon>
        <taxon>Pseudomonadota</taxon>
        <taxon>Gammaproteobacteria</taxon>
        <taxon>Moraxellales</taxon>
        <taxon>Moraxellaceae</taxon>
        <taxon>Acinetobacter</taxon>
        <taxon>Acinetobacter calcoaceticus/baumannii complex</taxon>
    </lineage>
</organism>
<gene>
    <name evidence="1" type="primary">nuoC</name>
    <name evidence="1" type="synonym">nuoCD</name>
    <name evidence="1" type="synonym">nuoD</name>
    <name type="ordered locus">ABSDF2712</name>
</gene>
<accession>B0VU54</accession>
<evidence type="ECO:0000255" key="1">
    <source>
        <dbReference type="HAMAP-Rule" id="MF_01359"/>
    </source>
</evidence>
<proteinExistence type="inferred from homology"/>
<protein>
    <recommendedName>
        <fullName evidence="1">NADH-quinone oxidoreductase subunit C/D</fullName>
        <ecNumber evidence="1">7.1.1.-</ecNumber>
    </recommendedName>
    <alternativeName>
        <fullName evidence="1">NADH dehydrogenase I subunit C/D</fullName>
    </alternativeName>
    <alternativeName>
        <fullName evidence="1">NDH-1 subunit C/D</fullName>
    </alternativeName>
</protein>
<keyword id="KW-0997">Cell inner membrane</keyword>
<keyword id="KW-1003">Cell membrane</keyword>
<keyword id="KW-0472">Membrane</keyword>
<keyword id="KW-0511">Multifunctional enzyme</keyword>
<keyword id="KW-0520">NAD</keyword>
<keyword id="KW-0874">Quinone</keyword>
<keyword id="KW-1278">Translocase</keyword>
<keyword id="KW-0813">Transport</keyword>
<keyword id="KW-0830">Ubiquinone</keyword>
<dbReference type="EC" id="7.1.1.-" evidence="1"/>
<dbReference type="EMBL" id="CU468230">
    <property type="protein sequence ID" value="CAP02017.1"/>
    <property type="molecule type" value="Genomic_DNA"/>
</dbReference>
<dbReference type="SMR" id="B0VU54"/>
<dbReference type="KEGG" id="abm:ABSDF2712"/>
<dbReference type="HOGENOM" id="CLU_015134_3_2_6"/>
<dbReference type="Proteomes" id="UP000001741">
    <property type="component" value="Chromosome"/>
</dbReference>
<dbReference type="GO" id="GO:0030964">
    <property type="term" value="C:NADH dehydrogenase complex"/>
    <property type="evidence" value="ECO:0007669"/>
    <property type="project" value="InterPro"/>
</dbReference>
<dbReference type="GO" id="GO:0005886">
    <property type="term" value="C:plasma membrane"/>
    <property type="evidence" value="ECO:0007669"/>
    <property type="project" value="UniProtKB-SubCell"/>
</dbReference>
<dbReference type="GO" id="GO:0051287">
    <property type="term" value="F:NAD binding"/>
    <property type="evidence" value="ECO:0007669"/>
    <property type="project" value="InterPro"/>
</dbReference>
<dbReference type="GO" id="GO:0008137">
    <property type="term" value="F:NADH dehydrogenase (ubiquinone) activity"/>
    <property type="evidence" value="ECO:0007669"/>
    <property type="project" value="InterPro"/>
</dbReference>
<dbReference type="GO" id="GO:0050136">
    <property type="term" value="F:NADH:ubiquinone reductase (non-electrogenic) activity"/>
    <property type="evidence" value="ECO:0007669"/>
    <property type="project" value="UniProtKB-UniRule"/>
</dbReference>
<dbReference type="GO" id="GO:0048038">
    <property type="term" value="F:quinone binding"/>
    <property type="evidence" value="ECO:0007669"/>
    <property type="project" value="UniProtKB-KW"/>
</dbReference>
<dbReference type="FunFam" id="1.10.645.10:FF:000001">
    <property type="entry name" value="NADH-quinone oxidoreductase subunit C/D"/>
    <property type="match status" value="1"/>
</dbReference>
<dbReference type="Gene3D" id="1.10.645.10">
    <property type="entry name" value="Cytochrome-c3 Hydrogenase, chain B"/>
    <property type="match status" value="1"/>
</dbReference>
<dbReference type="Gene3D" id="3.30.460.80">
    <property type="entry name" value="NADH:ubiquinone oxidoreductase, 30kDa subunit"/>
    <property type="match status" value="1"/>
</dbReference>
<dbReference type="HAMAP" id="MF_01357">
    <property type="entry name" value="NDH1_NuoC"/>
    <property type="match status" value="1"/>
</dbReference>
<dbReference type="HAMAP" id="MF_01359">
    <property type="entry name" value="NDH1_NuoCD_1"/>
    <property type="match status" value="1"/>
</dbReference>
<dbReference type="HAMAP" id="MF_01358">
    <property type="entry name" value="NDH1_NuoD"/>
    <property type="match status" value="1"/>
</dbReference>
<dbReference type="InterPro" id="IPR010218">
    <property type="entry name" value="NADH_DH_suC"/>
</dbReference>
<dbReference type="InterPro" id="IPR023062">
    <property type="entry name" value="NADH_DH_suCD"/>
</dbReference>
<dbReference type="InterPro" id="IPR001135">
    <property type="entry name" value="NADH_Q_OxRdtase_suD"/>
</dbReference>
<dbReference type="InterPro" id="IPR037232">
    <property type="entry name" value="NADH_quin_OxRdtase_su_C/D-like"/>
</dbReference>
<dbReference type="InterPro" id="IPR001268">
    <property type="entry name" value="NADH_UbQ_OxRdtase_30kDa_su"/>
</dbReference>
<dbReference type="InterPro" id="IPR014029">
    <property type="entry name" value="NADH_UbQ_OxRdtase_49kDa_CS"/>
</dbReference>
<dbReference type="InterPro" id="IPR020396">
    <property type="entry name" value="NADH_UbQ_OxRdtase_CS"/>
</dbReference>
<dbReference type="InterPro" id="IPR022885">
    <property type="entry name" value="NDH1_su_D/H"/>
</dbReference>
<dbReference type="InterPro" id="IPR029014">
    <property type="entry name" value="NiFe-Hase_large"/>
</dbReference>
<dbReference type="NCBIfam" id="TIGR01961">
    <property type="entry name" value="NuoC_fam"/>
    <property type="match status" value="1"/>
</dbReference>
<dbReference type="NCBIfam" id="TIGR01962">
    <property type="entry name" value="NuoD"/>
    <property type="match status" value="1"/>
</dbReference>
<dbReference type="NCBIfam" id="NF004739">
    <property type="entry name" value="PRK06075.1"/>
    <property type="match status" value="1"/>
</dbReference>
<dbReference type="NCBIfam" id="NF008728">
    <property type="entry name" value="PRK11742.1"/>
    <property type="match status" value="1"/>
</dbReference>
<dbReference type="PANTHER" id="PTHR11993:SF45">
    <property type="entry name" value="NADH-QUINONE OXIDOREDUCTASE SUBUNIT C_D"/>
    <property type="match status" value="1"/>
</dbReference>
<dbReference type="PANTHER" id="PTHR11993">
    <property type="entry name" value="NADH-UBIQUINONE OXIDOREDUCTASE 49 KDA SUBUNIT"/>
    <property type="match status" value="1"/>
</dbReference>
<dbReference type="Pfam" id="PF00329">
    <property type="entry name" value="Complex1_30kDa"/>
    <property type="match status" value="1"/>
</dbReference>
<dbReference type="Pfam" id="PF00346">
    <property type="entry name" value="Complex1_49kDa"/>
    <property type="match status" value="1"/>
</dbReference>
<dbReference type="SUPFAM" id="SSF56762">
    <property type="entry name" value="HydB/Nqo4-like"/>
    <property type="match status" value="1"/>
</dbReference>
<dbReference type="SUPFAM" id="SSF143243">
    <property type="entry name" value="Nqo5-like"/>
    <property type="match status" value="1"/>
</dbReference>
<dbReference type="PROSITE" id="PS00542">
    <property type="entry name" value="COMPLEX1_30K"/>
    <property type="match status" value="1"/>
</dbReference>
<dbReference type="PROSITE" id="PS00535">
    <property type="entry name" value="COMPLEX1_49K"/>
    <property type="match status" value="1"/>
</dbReference>
<sequence length="595" mass="68580">MAETDIAMPESTPVDSRPAFAIVEELKTKFGENFYVQATFEEFPTVWVERARVQEVLMFLRKVERPYVMLFDLSAMDERLRQHRDGLPASDFTVFYHLLSLERNSDIRIKVALNENDLNLPTATNIWPNANWYEREAYDMFGINFEGHPMLRRILLPTYWEGHPLRKEYSARATEYTPYMQDKAKQDFEQEHLRFVPEDWGLKRGNADEDFMFLNLGPNHPSAHGAFRIVLQLDGEEVKDCVPDIGYHHRGVEKMAERQTWHSFIPYTDRVDYLGGCAQNMPYVMAVEQLAGIKVPERAQVIRVMLNELFRINNHLLYCGTAIQDAGGMTPVFYMFADRQKVYDIVEAITGYRMHPAWFRIGGTAHDLPNNWQKLVKELLDWMPKRLNEYYTAAFKNSVFIGRTRNVAQYDAKSALAWGVTGTGLRATGIDFDVRKYRPYSGYENFDFEVPVEYEGDAYARVLVHFREIEQSLKIIKQCLDNMPSGPYKADHPLAVPPPKDKTLQDIETLITHFLSVSWGPVMPAGEASFMTEVVKGASTYYLTSDKATMSYRTRIRTPTFTHLQQIPSVINGSLVSDLIIYLATIDVVMADVDR</sequence>
<feature type="chain" id="PRO_0000358609" description="NADH-quinone oxidoreductase subunit C/D">
    <location>
        <begin position="1"/>
        <end position="595"/>
    </location>
</feature>
<feature type="region of interest" description="NADH dehydrogenase I subunit C" evidence="1">
    <location>
        <begin position="1"/>
        <end position="186"/>
    </location>
</feature>
<feature type="region of interest" description="NADH dehydrogenase I subunit D" evidence="1">
    <location>
        <begin position="210"/>
        <end position="595"/>
    </location>
</feature>
<reference key="1">
    <citation type="journal article" date="2008" name="PLoS ONE">
        <title>Comparative analysis of Acinetobacters: three genomes for three lifestyles.</title>
        <authorList>
            <person name="Vallenet D."/>
            <person name="Nordmann P."/>
            <person name="Barbe V."/>
            <person name="Poirel L."/>
            <person name="Mangenot S."/>
            <person name="Bataille E."/>
            <person name="Dossat C."/>
            <person name="Gas S."/>
            <person name="Kreimeyer A."/>
            <person name="Lenoble P."/>
            <person name="Oztas S."/>
            <person name="Poulain J."/>
            <person name="Segurens B."/>
            <person name="Robert C."/>
            <person name="Abergel C."/>
            <person name="Claverie J.-M."/>
            <person name="Raoult D."/>
            <person name="Medigue C."/>
            <person name="Weissenbach J."/>
            <person name="Cruveiller S."/>
        </authorList>
    </citation>
    <scope>NUCLEOTIDE SEQUENCE [LARGE SCALE GENOMIC DNA]</scope>
    <source>
        <strain>SDF</strain>
    </source>
</reference>
<comment type="function">
    <text evidence="1">NDH-1 shuttles electrons from NADH, via FMN and iron-sulfur (Fe-S) centers, to quinones in the respiratory chain. The immediate electron acceptor for the enzyme in this species is believed to be ubiquinone. Couples the redox reaction to proton translocation (for every two electrons transferred, four hydrogen ions are translocated across the cytoplasmic membrane), and thus conserves the redox energy in a proton gradient.</text>
</comment>
<comment type="catalytic activity">
    <reaction evidence="1">
        <text>a quinone + NADH + 5 H(+)(in) = a quinol + NAD(+) + 4 H(+)(out)</text>
        <dbReference type="Rhea" id="RHEA:57888"/>
        <dbReference type="ChEBI" id="CHEBI:15378"/>
        <dbReference type="ChEBI" id="CHEBI:24646"/>
        <dbReference type="ChEBI" id="CHEBI:57540"/>
        <dbReference type="ChEBI" id="CHEBI:57945"/>
        <dbReference type="ChEBI" id="CHEBI:132124"/>
    </reaction>
</comment>
<comment type="subunit">
    <text evidence="1">NDH-1 is composed of 13 different subunits. Subunits NuoB, CD, E, F, and G constitute the peripheral sector of the complex.</text>
</comment>
<comment type="subcellular location">
    <subcellularLocation>
        <location evidence="1">Cell inner membrane</location>
        <topology evidence="1">Peripheral membrane protein</topology>
        <orientation evidence="1">Cytoplasmic side</orientation>
    </subcellularLocation>
</comment>
<comment type="similarity">
    <text evidence="1">In the N-terminal section; belongs to the complex I 30 kDa subunit family.</text>
</comment>
<comment type="similarity">
    <text evidence="1">In the C-terminal section; belongs to the complex I 49 kDa subunit family.</text>
</comment>